<organism>
    <name type="scientific">Homo sapiens</name>
    <name type="common">Human</name>
    <dbReference type="NCBI Taxonomy" id="9606"/>
    <lineage>
        <taxon>Eukaryota</taxon>
        <taxon>Metazoa</taxon>
        <taxon>Chordata</taxon>
        <taxon>Craniata</taxon>
        <taxon>Vertebrata</taxon>
        <taxon>Euteleostomi</taxon>
        <taxon>Mammalia</taxon>
        <taxon>Eutheria</taxon>
        <taxon>Euarchontoglires</taxon>
        <taxon>Primates</taxon>
        <taxon>Haplorrhini</taxon>
        <taxon>Catarrhini</taxon>
        <taxon>Hominidae</taxon>
        <taxon>Homo</taxon>
    </lineage>
</organism>
<keyword id="KW-0002">3D-structure</keyword>
<keyword id="KW-0025">Alternative splicing</keyword>
<keyword id="KW-0238">DNA-binding</keyword>
<keyword id="KW-0371">Homeobox</keyword>
<keyword id="KW-1017">Isopeptide bond</keyword>
<keyword id="KW-0539">Nucleus</keyword>
<keyword id="KW-0597">Phosphoprotein</keyword>
<keyword id="KW-1267">Proteomics identification</keyword>
<keyword id="KW-1185">Reference proteome</keyword>
<keyword id="KW-0677">Repeat</keyword>
<keyword id="KW-0804">Transcription</keyword>
<keyword id="KW-0805">Transcription regulation</keyword>
<keyword id="KW-0832">Ubl conjugation</keyword>
<reference key="1">
    <citation type="journal article" date="2003" name="Proc. Natl. Acad. Sci. U.S.A.">
        <title>Homez, a homeobox leucine zipper gene specific to the vertebrate lineage.</title>
        <authorList>
            <person name="Bayarsaihan D."/>
            <person name="Enkhmandakh B."/>
            <person name="Makeyev A."/>
            <person name="Greally J.M."/>
            <person name="Leckman J.F."/>
            <person name="Ruddle F.H."/>
        </authorList>
    </citation>
    <scope>NUCLEOTIDE SEQUENCE [MRNA] (ISOFORM 1)</scope>
    <scope>SUBCELLULAR LOCATION</scope>
    <scope>ALTERNATIVE SPLICING</scope>
    <scope>INTERACTION WITH HOXC8</scope>
    <scope>TISSUE SPECIFICITY</scope>
</reference>
<reference key="2">
    <citation type="journal article" date="2000" name="DNA Res.">
        <title>Prediction of the coding sequences of unidentified human genes. XVI. The complete sequences of 150 new cDNA clones from brain which code for large proteins in vitro.</title>
        <authorList>
            <person name="Nagase T."/>
            <person name="Kikuno R."/>
            <person name="Ishikawa K."/>
            <person name="Hirosawa M."/>
            <person name="Ohara O."/>
        </authorList>
    </citation>
    <scope>NUCLEOTIDE SEQUENCE [LARGE SCALE MRNA] (ISOFORM 1)</scope>
    <source>
        <tissue>Brain</tissue>
    </source>
</reference>
<reference key="3">
    <citation type="journal article" date="2004" name="Nat. Genet.">
        <title>Complete sequencing and characterization of 21,243 full-length human cDNAs.</title>
        <authorList>
            <person name="Ota T."/>
            <person name="Suzuki Y."/>
            <person name="Nishikawa T."/>
            <person name="Otsuki T."/>
            <person name="Sugiyama T."/>
            <person name="Irie R."/>
            <person name="Wakamatsu A."/>
            <person name="Hayashi K."/>
            <person name="Sato H."/>
            <person name="Nagai K."/>
            <person name="Kimura K."/>
            <person name="Makita H."/>
            <person name="Sekine M."/>
            <person name="Obayashi M."/>
            <person name="Nishi T."/>
            <person name="Shibahara T."/>
            <person name="Tanaka T."/>
            <person name="Ishii S."/>
            <person name="Yamamoto J."/>
            <person name="Saito K."/>
            <person name="Kawai Y."/>
            <person name="Isono Y."/>
            <person name="Nakamura Y."/>
            <person name="Nagahari K."/>
            <person name="Murakami K."/>
            <person name="Yasuda T."/>
            <person name="Iwayanagi T."/>
            <person name="Wagatsuma M."/>
            <person name="Shiratori A."/>
            <person name="Sudo H."/>
            <person name="Hosoiri T."/>
            <person name="Kaku Y."/>
            <person name="Kodaira H."/>
            <person name="Kondo H."/>
            <person name="Sugawara M."/>
            <person name="Takahashi M."/>
            <person name="Kanda K."/>
            <person name="Yokoi T."/>
            <person name="Furuya T."/>
            <person name="Kikkawa E."/>
            <person name="Omura Y."/>
            <person name="Abe K."/>
            <person name="Kamihara K."/>
            <person name="Katsuta N."/>
            <person name="Sato K."/>
            <person name="Tanikawa M."/>
            <person name="Yamazaki M."/>
            <person name="Ninomiya K."/>
            <person name="Ishibashi T."/>
            <person name="Yamashita H."/>
            <person name="Murakawa K."/>
            <person name="Fujimori K."/>
            <person name="Tanai H."/>
            <person name="Kimata M."/>
            <person name="Watanabe M."/>
            <person name="Hiraoka S."/>
            <person name="Chiba Y."/>
            <person name="Ishida S."/>
            <person name="Ono Y."/>
            <person name="Takiguchi S."/>
            <person name="Watanabe S."/>
            <person name="Yosida M."/>
            <person name="Hotuta T."/>
            <person name="Kusano J."/>
            <person name="Kanehori K."/>
            <person name="Takahashi-Fujii A."/>
            <person name="Hara H."/>
            <person name="Tanase T.-O."/>
            <person name="Nomura Y."/>
            <person name="Togiya S."/>
            <person name="Komai F."/>
            <person name="Hara R."/>
            <person name="Takeuchi K."/>
            <person name="Arita M."/>
            <person name="Imose N."/>
            <person name="Musashino K."/>
            <person name="Yuuki H."/>
            <person name="Oshima A."/>
            <person name="Sasaki N."/>
            <person name="Aotsuka S."/>
            <person name="Yoshikawa Y."/>
            <person name="Matsunawa H."/>
            <person name="Ichihara T."/>
            <person name="Shiohata N."/>
            <person name="Sano S."/>
            <person name="Moriya S."/>
            <person name="Momiyama H."/>
            <person name="Satoh N."/>
            <person name="Takami S."/>
            <person name="Terashima Y."/>
            <person name="Suzuki O."/>
            <person name="Nakagawa S."/>
            <person name="Senoh A."/>
            <person name="Mizoguchi H."/>
            <person name="Goto Y."/>
            <person name="Shimizu F."/>
            <person name="Wakebe H."/>
            <person name="Hishigaki H."/>
            <person name="Watanabe T."/>
            <person name="Sugiyama A."/>
            <person name="Takemoto M."/>
            <person name="Kawakami B."/>
            <person name="Yamazaki M."/>
            <person name="Watanabe K."/>
            <person name="Kumagai A."/>
            <person name="Itakura S."/>
            <person name="Fukuzumi Y."/>
            <person name="Fujimori Y."/>
            <person name="Komiyama M."/>
            <person name="Tashiro H."/>
            <person name="Tanigami A."/>
            <person name="Fujiwara T."/>
            <person name="Ono T."/>
            <person name="Yamada K."/>
            <person name="Fujii Y."/>
            <person name="Ozaki K."/>
            <person name="Hirao M."/>
            <person name="Ohmori Y."/>
            <person name="Kawabata A."/>
            <person name="Hikiji T."/>
            <person name="Kobatake N."/>
            <person name="Inagaki H."/>
            <person name="Ikema Y."/>
            <person name="Okamoto S."/>
            <person name="Okitani R."/>
            <person name="Kawakami T."/>
            <person name="Noguchi S."/>
            <person name="Itoh T."/>
            <person name="Shigeta K."/>
            <person name="Senba T."/>
            <person name="Matsumura K."/>
            <person name="Nakajima Y."/>
            <person name="Mizuno T."/>
            <person name="Morinaga M."/>
            <person name="Sasaki M."/>
            <person name="Togashi T."/>
            <person name="Oyama M."/>
            <person name="Hata H."/>
            <person name="Watanabe M."/>
            <person name="Komatsu T."/>
            <person name="Mizushima-Sugano J."/>
            <person name="Satoh T."/>
            <person name="Shirai Y."/>
            <person name="Takahashi Y."/>
            <person name="Nakagawa K."/>
            <person name="Okumura K."/>
            <person name="Nagase T."/>
            <person name="Nomura N."/>
            <person name="Kikuchi H."/>
            <person name="Masuho Y."/>
            <person name="Yamashita R."/>
            <person name="Nakai K."/>
            <person name="Yada T."/>
            <person name="Nakamura Y."/>
            <person name="Ohara O."/>
            <person name="Isogai T."/>
            <person name="Sugano S."/>
        </authorList>
    </citation>
    <scope>NUCLEOTIDE SEQUENCE [LARGE SCALE MRNA] (ISOFORM 2)</scope>
    <source>
        <tissue>Testis</tissue>
    </source>
</reference>
<reference key="4">
    <citation type="journal article" date="2003" name="Nature">
        <title>The DNA sequence and analysis of human chromosome 14.</title>
        <authorList>
            <person name="Heilig R."/>
            <person name="Eckenberg R."/>
            <person name="Petit J.-L."/>
            <person name="Fonknechten N."/>
            <person name="Da Silva C."/>
            <person name="Cattolico L."/>
            <person name="Levy M."/>
            <person name="Barbe V."/>
            <person name="De Berardinis V."/>
            <person name="Ureta-Vidal A."/>
            <person name="Pelletier E."/>
            <person name="Vico V."/>
            <person name="Anthouard V."/>
            <person name="Rowen L."/>
            <person name="Madan A."/>
            <person name="Qin S."/>
            <person name="Sun H."/>
            <person name="Du H."/>
            <person name="Pepin K."/>
            <person name="Artiguenave F."/>
            <person name="Robert C."/>
            <person name="Cruaud C."/>
            <person name="Bruels T."/>
            <person name="Jaillon O."/>
            <person name="Friedlander L."/>
            <person name="Samson G."/>
            <person name="Brottier P."/>
            <person name="Cure S."/>
            <person name="Segurens B."/>
            <person name="Aniere F."/>
            <person name="Samain S."/>
            <person name="Crespeau H."/>
            <person name="Abbasi N."/>
            <person name="Aiach N."/>
            <person name="Boscus D."/>
            <person name="Dickhoff R."/>
            <person name="Dors M."/>
            <person name="Dubois I."/>
            <person name="Friedman C."/>
            <person name="Gouyvenoux M."/>
            <person name="James R."/>
            <person name="Madan A."/>
            <person name="Mairey-Estrada B."/>
            <person name="Mangenot S."/>
            <person name="Martins N."/>
            <person name="Menard M."/>
            <person name="Oztas S."/>
            <person name="Ratcliffe A."/>
            <person name="Shaffer T."/>
            <person name="Trask B."/>
            <person name="Vacherie B."/>
            <person name="Bellemere C."/>
            <person name="Belser C."/>
            <person name="Besnard-Gonnet M."/>
            <person name="Bartol-Mavel D."/>
            <person name="Boutard M."/>
            <person name="Briez-Silla S."/>
            <person name="Combette S."/>
            <person name="Dufosse-Laurent V."/>
            <person name="Ferron C."/>
            <person name="Lechaplais C."/>
            <person name="Louesse C."/>
            <person name="Muselet D."/>
            <person name="Magdelenat G."/>
            <person name="Pateau E."/>
            <person name="Petit E."/>
            <person name="Sirvain-Trukniewicz P."/>
            <person name="Trybou A."/>
            <person name="Vega-Czarny N."/>
            <person name="Bataille E."/>
            <person name="Bluet E."/>
            <person name="Bordelais I."/>
            <person name="Dubois M."/>
            <person name="Dumont C."/>
            <person name="Guerin T."/>
            <person name="Haffray S."/>
            <person name="Hammadi R."/>
            <person name="Muanga J."/>
            <person name="Pellouin V."/>
            <person name="Robert D."/>
            <person name="Wunderle E."/>
            <person name="Gauguet G."/>
            <person name="Roy A."/>
            <person name="Sainte-Marthe L."/>
            <person name="Verdier J."/>
            <person name="Verdier-Discala C."/>
            <person name="Hillier L.W."/>
            <person name="Fulton L."/>
            <person name="McPherson J."/>
            <person name="Matsuda F."/>
            <person name="Wilson R."/>
            <person name="Scarpelli C."/>
            <person name="Gyapay G."/>
            <person name="Wincker P."/>
            <person name="Saurin W."/>
            <person name="Quetier F."/>
            <person name="Waterston R."/>
            <person name="Hood L."/>
            <person name="Weissenbach J."/>
        </authorList>
    </citation>
    <scope>NUCLEOTIDE SEQUENCE [LARGE SCALE GENOMIC DNA]</scope>
</reference>
<reference key="5">
    <citation type="journal article" date="2004" name="Genome Res.">
        <title>The status, quality, and expansion of the NIH full-length cDNA project: the Mammalian Gene Collection (MGC).</title>
        <authorList>
            <consortium name="The MGC Project Team"/>
        </authorList>
    </citation>
    <scope>NUCLEOTIDE SEQUENCE [LARGE SCALE MRNA] OF 10-550 (ISOFORM 1)</scope>
    <source>
        <tissue>Testis</tissue>
    </source>
</reference>
<reference key="6">
    <citation type="journal article" date="2009" name="Sci. Signal.">
        <title>Quantitative phosphoproteomic analysis of T cell receptor signaling reveals system-wide modulation of protein-protein interactions.</title>
        <authorList>
            <person name="Mayya V."/>
            <person name="Lundgren D.H."/>
            <person name="Hwang S.-I."/>
            <person name="Rezaul K."/>
            <person name="Wu L."/>
            <person name="Eng J.K."/>
            <person name="Rodionov V."/>
            <person name="Han D.K."/>
        </authorList>
    </citation>
    <scope>PHOSPHORYLATION [LARGE SCALE ANALYSIS] AT THR-451</scope>
    <scope>IDENTIFICATION BY MASS SPECTROMETRY [LARGE SCALE ANALYSIS]</scope>
    <source>
        <tissue>Leukemic T-cell</tissue>
    </source>
</reference>
<reference key="7">
    <citation type="journal article" date="2010" name="Sci. Signal.">
        <title>Quantitative phosphoproteomics reveals widespread full phosphorylation site occupancy during mitosis.</title>
        <authorList>
            <person name="Olsen J.V."/>
            <person name="Vermeulen M."/>
            <person name="Santamaria A."/>
            <person name="Kumar C."/>
            <person name="Miller M.L."/>
            <person name="Jensen L.J."/>
            <person name="Gnad F."/>
            <person name="Cox J."/>
            <person name="Jensen T.S."/>
            <person name="Nigg E.A."/>
            <person name="Brunak S."/>
            <person name="Mann M."/>
        </authorList>
    </citation>
    <scope>PHOSPHORYLATION [LARGE SCALE ANALYSIS] AT SER-351</scope>
    <scope>IDENTIFICATION BY MASS SPECTROMETRY [LARGE SCALE ANALYSIS]</scope>
    <source>
        <tissue>Cervix carcinoma</tissue>
    </source>
</reference>
<reference key="8">
    <citation type="journal article" date="2013" name="J. Proteome Res.">
        <title>Toward a comprehensive characterization of a human cancer cell phosphoproteome.</title>
        <authorList>
            <person name="Zhou H."/>
            <person name="Di Palma S."/>
            <person name="Preisinger C."/>
            <person name="Peng M."/>
            <person name="Polat A.N."/>
            <person name="Heck A.J."/>
            <person name="Mohammed S."/>
        </authorList>
    </citation>
    <scope>PHOSPHORYLATION [LARGE SCALE ANALYSIS] AT SER-351 AND THR-451</scope>
    <scope>IDENTIFICATION BY MASS SPECTROMETRY [LARGE SCALE ANALYSIS]</scope>
    <source>
        <tissue>Cervix carcinoma</tissue>
        <tissue>Erythroleukemia</tissue>
    </source>
</reference>
<reference key="9">
    <citation type="journal article" date="2015" name="Cell Rep.">
        <title>SUMO-2 orchestrates chromatin modifiers in response to DNA damage.</title>
        <authorList>
            <person name="Hendriks I.A."/>
            <person name="Treffers L.W."/>
            <person name="Verlaan-de Vries M."/>
            <person name="Olsen J.V."/>
            <person name="Vertegaal A.C."/>
        </authorList>
    </citation>
    <scope>SUMOYLATION [LARGE SCALE ANALYSIS] AT LYS-182</scope>
    <scope>IDENTIFICATION BY MASS SPECTROMETRY [LARGE SCALE ANALYSIS]</scope>
</reference>
<reference key="10">
    <citation type="journal article" date="2017" name="Nat. Struct. Mol. Biol.">
        <title>Site-specific mapping of the human SUMO proteome reveals co-modification with phosphorylation.</title>
        <authorList>
            <person name="Hendriks I.A."/>
            <person name="Lyon D."/>
            <person name="Young C."/>
            <person name="Jensen L.J."/>
            <person name="Vertegaal A.C."/>
            <person name="Nielsen M.L."/>
        </authorList>
    </citation>
    <scope>SUMOYLATION [LARGE SCALE ANALYSIS] AT LYS-182; LYS-200 AND LYS-202</scope>
    <scope>IDENTIFICATION BY MASS SPECTROMETRY [LARGE SCALE ANALYSIS]</scope>
</reference>
<reference key="11">
    <citation type="submission" date="2007-02" db="PDB data bank">
        <title>Solution structure of the homeobox domains of human homeodomain leucine zipper-encoding gene (HOMEZ).</title>
        <authorList>
            <consortium name="RIKEN structural genomics initiative (RSGI)"/>
        </authorList>
    </citation>
    <scope>STRUCTURE BY NMR OF 361-423 AND 453-509</scope>
</reference>
<accession>Q8IX15</accession>
<accession>A1L445</accession>
<accession>B4DZ80</accession>
<accession>F8WCA3</accession>
<accession>Q6P049</accession>
<accession>Q86XB6</accession>
<accession>Q9P2A5</accession>
<feature type="chain" id="PRO_0000049135" description="Homeobox and leucine zipper protein Homez">
    <location>
        <begin position="1"/>
        <end position="550"/>
    </location>
</feature>
<feature type="DNA-binding region" description="Homeobox 1" evidence="2">
    <location>
        <begin position="55"/>
        <end position="114"/>
    </location>
</feature>
<feature type="DNA-binding region" description="Homeobox 2" evidence="2">
    <location>
        <begin position="355"/>
        <end position="415"/>
    </location>
</feature>
<feature type="DNA-binding region" description="Homeobox 3" evidence="2">
    <location>
        <begin position="451"/>
        <end position="510"/>
    </location>
</feature>
<feature type="region of interest" description="Disordered" evidence="3">
    <location>
        <begin position="1"/>
        <end position="36"/>
    </location>
</feature>
<feature type="region of interest" description="Disordered" evidence="3">
    <location>
        <begin position="168"/>
        <end position="199"/>
    </location>
</feature>
<feature type="region of interest" description="Disordered" evidence="3">
    <location>
        <begin position="223"/>
        <end position="265"/>
    </location>
</feature>
<feature type="region of interest" description="Disordered" evidence="3">
    <location>
        <begin position="424"/>
        <end position="465"/>
    </location>
</feature>
<feature type="region of interest" description="Disordered" evidence="3">
    <location>
        <begin position="512"/>
        <end position="550"/>
    </location>
</feature>
<feature type="short sequence motif" description="Nuclear localization signal" evidence="1">
    <location>
        <begin position="358"/>
        <end position="363"/>
    </location>
</feature>
<feature type="compositionally biased region" description="Pro residues" evidence="3">
    <location>
        <begin position="1"/>
        <end position="10"/>
    </location>
</feature>
<feature type="compositionally biased region" description="Polar residues" evidence="3">
    <location>
        <begin position="237"/>
        <end position="256"/>
    </location>
</feature>
<feature type="compositionally biased region" description="Pro residues" evidence="3">
    <location>
        <begin position="452"/>
        <end position="463"/>
    </location>
</feature>
<feature type="compositionally biased region" description="Acidic residues" evidence="3">
    <location>
        <begin position="513"/>
        <end position="550"/>
    </location>
</feature>
<feature type="modified residue" description="Phosphoserine" evidence="8 9">
    <location>
        <position position="351"/>
    </location>
</feature>
<feature type="modified residue" description="Phosphothreonine" evidence="7 9">
    <location>
        <position position="451"/>
    </location>
</feature>
<feature type="cross-link" description="Glycyl lysine isopeptide (Lys-Gly) (interchain with G-Cter in SUMO2)" evidence="10 11">
    <location>
        <position position="182"/>
    </location>
</feature>
<feature type="cross-link" description="Glycyl lysine isopeptide (Lys-Gly) (interchain with G-Cter in SUMO2)" evidence="11">
    <location>
        <position position="200"/>
    </location>
</feature>
<feature type="cross-link" description="Glycyl lysine isopeptide (Lys-Gly) (interchain with G-Cter in SUMO2)" evidence="11">
    <location>
        <position position="202"/>
    </location>
</feature>
<feature type="splice variant" id="VSP_054303" description="In isoform 2." evidence="5">
    <original>MVRGWEPPPGLDC</original>
    <variation>MLKSRISMRSRHPRR</variation>
    <location>
        <begin position="1"/>
        <end position="13"/>
    </location>
</feature>
<feature type="sequence variant" id="VAR_055956" description="In dbSNP:rs10131813.">
    <original>A</original>
    <variation>T</variation>
    <location>
        <position position="278"/>
    </location>
</feature>
<feature type="sequence conflict" description="In Ref. 5; AAI30393." evidence="6" ref="5">
    <original>A</original>
    <variation>T</variation>
    <location>
        <position position="302"/>
    </location>
</feature>
<feature type="sequence conflict" description="In Ref. 1; AAN76991, 2; BAA92681 and 5; AAI30393." evidence="6" ref="1 2 5">
    <location>
        <position position="529"/>
    </location>
</feature>
<feature type="sequence conflict" description="In Ref. 5; AAI30393." evidence="6" ref="5">
    <original>D</original>
    <variation>E</variation>
    <location>
        <position position="538"/>
    </location>
</feature>
<feature type="sequence conflict" description="In Ref. 3; BAG63992." evidence="6" ref="3">
    <location>
        <position position="538"/>
    </location>
</feature>
<feature type="helix" evidence="12">
    <location>
        <begin position="365"/>
        <end position="377"/>
    </location>
</feature>
<feature type="helix" evidence="12">
    <location>
        <begin position="383"/>
        <end position="392"/>
    </location>
</feature>
<feature type="helix" evidence="12">
    <location>
        <begin position="397"/>
        <end position="413"/>
    </location>
</feature>
<feature type="helix" evidence="13">
    <location>
        <begin position="464"/>
        <end position="472"/>
    </location>
</feature>
<feature type="helix" evidence="13">
    <location>
        <begin position="480"/>
        <end position="487"/>
    </location>
</feature>
<feature type="helix" evidence="13">
    <location>
        <begin position="492"/>
        <end position="502"/>
    </location>
</feature>
<dbReference type="EMBL" id="AF463523">
    <property type="protein sequence ID" value="AAN76991.1"/>
    <property type="status" value="ALT_INIT"/>
    <property type="molecule type" value="mRNA"/>
</dbReference>
<dbReference type="EMBL" id="AB037864">
    <property type="protein sequence ID" value="BAA92681.1"/>
    <property type="status" value="ALT_INIT"/>
    <property type="molecule type" value="mRNA"/>
</dbReference>
<dbReference type="EMBL" id="AK302788">
    <property type="protein sequence ID" value="BAG63992.1"/>
    <property type="molecule type" value="mRNA"/>
</dbReference>
<dbReference type="EMBL" id="AL049829">
    <property type="status" value="NOT_ANNOTATED_CDS"/>
    <property type="molecule type" value="Genomic_DNA"/>
</dbReference>
<dbReference type="EMBL" id="BC130392">
    <property type="protein sequence ID" value="AAI30393.1"/>
    <property type="molecule type" value="mRNA"/>
</dbReference>
<dbReference type="CCDS" id="CCDS45085.1">
    <molecule id="Q8IX15-1"/>
</dbReference>
<dbReference type="RefSeq" id="NP_065885.2">
    <molecule id="Q8IX15-1"/>
    <property type="nucleotide sequence ID" value="NM_020834.3"/>
</dbReference>
<dbReference type="PDB" id="2ECC">
    <property type="method" value="NMR"/>
    <property type="chains" value="A=361-423"/>
</dbReference>
<dbReference type="PDB" id="2YS9">
    <property type="method" value="NMR"/>
    <property type="chains" value="A=453-509"/>
</dbReference>
<dbReference type="PDBsum" id="2ECC"/>
<dbReference type="PDBsum" id="2YS9"/>
<dbReference type="BMRB" id="Q8IX15"/>
<dbReference type="SMR" id="Q8IX15"/>
<dbReference type="BioGRID" id="121645">
    <property type="interactions" value="144"/>
</dbReference>
<dbReference type="FunCoup" id="Q8IX15">
    <property type="interactions" value="1301"/>
</dbReference>
<dbReference type="IntAct" id="Q8IX15">
    <property type="interactions" value="57"/>
</dbReference>
<dbReference type="MINT" id="Q8IX15"/>
<dbReference type="STRING" id="9606.ENSP00000350049"/>
<dbReference type="GlyGen" id="Q8IX15">
    <property type="glycosylation" value="1 site"/>
</dbReference>
<dbReference type="iPTMnet" id="Q8IX15"/>
<dbReference type="PhosphoSitePlus" id="Q8IX15"/>
<dbReference type="BioMuta" id="HOMEZ"/>
<dbReference type="DMDM" id="317373364"/>
<dbReference type="jPOST" id="Q8IX15"/>
<dbReference type="MassIVE" id="Q8IX15"/>
<dbReference type="PaxDb" id="9606-ENSP00000350049"/>
<dbReference type="PeptideAtlas" id="Q8IX15"/>
<dbReference type="ProteomicsDB" id="70963">
    <molecule id="Q8IX15-1"/>
</dbReference>
<dbReference type="Pumba" id="Q8IX15"/>
<dbReference type="Antibodypedia" id="22427">
    <property type="antibodies" value="152 antibodies from 27 providers"/>
</dbReference>
<dbReference type="DNASU" id="57594"/>
<dbReference type="Ensembl" id="ENST00000357460.7">
    <molecule id="Q8IX15-1"/>
    <property type="protein sequence ID" value="ENSP00000350049.4"/>
    <property type="gene ID" value="ENSG00000290292.10"/>
</dbReference>
<dbReference type="Ensembl" id="ENST00000561013.3">
    <molecule id="Q8IX15-3"/>
    <property type="protein sequence ID" value="ENSP00000453979.1"/>
    <property type="gene ID" value="ENSG00000290292.10"/>
</dbReference>
<dbReference type="GeneID" id="57594"/>
<dbReference type="KEGG" id="hsa:57594"/>
<dbReference type="MANE-Select" id="ENST00000357460.7">
    <property type="protein sequence ID" value="ENSP00000350049.4"/>
    <property type="RefSeq nucleotide sequence ID" value="NM_020834.3"/>
    <property type="RefSeq protein sequence ID" value="NP_065885.2"/>
</dbReference>
<dbReference type="UCSC" id="uc001wja.3">
    <molecule id="Q8IX15-1"/>
    <property type="organism name" value="human"/>
</dbReference>
<dbReference type="AGR" id="HGNC:20164"/>
<dbReference type="CTD" id="57594"/>
<dbReference type="DisGeNET" id="57594"/>
<dbReference type="GeneCards" id="HOMEZ"/>
<dbReference type="HGNC" id="HGNC:20164">
    <property type="gene designation" value="HOMEZ"/>
</dbReference>
<dbReference type="HPA" id="ENSG00000290292">
    <property type="expression patterns" value="Low tissue specificity"/>
</dbReference>
<dbReference type="MIM" id="608119">
    <property type="type" value="gene"/>
</dbReference>
<dbReference type="neXtProt" id="NX_Q8IX15"/>
<dbReference type="PharmGKB" id="PA162391555"/>
<dbReference type="VEuPathDB" id="HostDB:ENSG00000215271"/>
<dbReference type="eggNOG" id="KOG3986">
    <property type="taxonomic scope" value="Eukaryota"/>
</dbReference>
<dbReference type="GeneTree" id="ENSGT00950000182893"/>
<dbReference type="HOGENOM" id="CLU_032878_0_0_1"/>
<dbReference type="InParanoid" id="Q8IX15"/>
<dbReference type="OMA" id="RYWATHQ"/>
<dbReference type="PAN-GO" id="Q8IX15">
    <property type="GO annotations" value="3 GO annotations based on evolutionary models"/>
</dbReference>
<dbReference type="PhylomeDB" id="Q8IX15"/>
<dbReference type="TreeFam" id="TF333363"/>
<dbReference type="PathwayCommons" id="Q8IX15"/>
<dbReference type="SignaLink" id="Q8IX15"/>
<dbReference type="BioGRID-ORCS" id="57594">
    <property type="hits" value="24 hits in 1174 CRISPR screens"/>
</dbReference>
<dbReference type="ChiTaRS" id="HOMEZ">
    <property type="organism name" value="human"/>
</dbReference>
<dbReference type="EvolutionaryTrace" id="Q8IX15"/>
<dbReference type="GenomeRNAi" id="57594"/>
<dbReference type="Pharos" id="Q8IX15">
    <property type="development level" value="Tbio"/>
</dbReference>
<dbReference type="PRO" id="PR:Q8IX15"/>
<dbReference type="Proteomes" id="UP000005640">
    <property type="component" value="Chromosome 14"/>
</dbReference>
<dbReference type="RNAct" id="Q8IX15">
    <property type="molecule type" value="protein"/>
</dbReference>
<dbReference type="Bgee" id="ENSG00000215271">
    <property type="expression patterns" value="Expressed in left testis and 100 other cell types or tissues"/>
</dbReference>
<dbReference type="ExpressionAtlas" id="Q8IX15">
    <property type="expression patterns" value="baseline and differential"/>
</dbReference>
<dbReference type="GO" id="GO:0000785">
    <property type="term" value="C:chromatin"/>
    <property type="evidence" value="ECO:0000247"/>
    <property type="project" value="NTNU_SB"/>
</dbReference>
<dbReference type="GO" id="GO:0005829">
    <property type="term" value="C:cytosol"/>
    <property type="evidence" value="ECO:0000314"/>
    <property type="project" value="HPA"/>
</dbReference>
<dbReference type="GO" id="GO:0005730">
    <property type="term" value="C:nucleolus"/>
    <property type="evidence" value="ECO:0000314"/>
    <property type="project" value="HPA"/>
</dbReference>
<dbReference type="GO" id="GO:0005654">
    <property type="term" value="C:nucleoplasm"/>
    <property type="evidence" value="ECO:0000314"/>
    <property type="project" value="HPA"/>
</dbReference>
<dbReference type="GO" id="GO:0005634">
    <property type="term" value="C:nucleus"/>
    <property type="evidence" value="ECO:0000318"/>
    <property type="project" value="GO_Central"/>
</dbReference>
<dbReference type="GO" id="GO:0003677">
    <property type="term" value="F:DNA binding"/>
    <property type="evidence" value="ECO:0007669"/>
    <property type="project" value="UniProtKB-KW"/>
</dbReference>
<dbReference type="GO" id="GO:0000981">
    <property type="term" value="F:DNA-binding transcription factor activity, RNA polymerase II-specific"/>
    <property type="evidence" value="ECO:0000247"/>
    <property type="project" value="NTNU_SB"/>
</dbReference>
<dbReference type="GO" id="GO:0006357">
    <property type="term" value="P:regulation of transcription by RNA polymerase II"/>
    <property type="evidence" value="ECO:0000318"/>
    <property type="project" value="GO_Central"/>
</dbReference>
<dbReference type="CDD" id="cd00086">
    <property type="entry name" value="homeodomain"/>
    <property type="match status" value="2"/>
</dbReference>
<dbReference type="FunFam" id="1.10.10.60:FF:000172">
    <property type="entry name" value="Homeobox and leucine zipper protein Homez"/>
    <property type="match status" value="1"/>
</dbReference>
<dbReference type="FunFam" id="1.10.10.60:FF:000211">
    <property type="entry name" value="Homeobox and leucine zipper protein Homez"/>
    <property type="match status" value="1"/>
</dbReference>
<dbReference type="Gene3D" id="1.10.10.60">
    <property type="entry name" value="Homeodomain-like"/>
    <property type="match status" value="3"/>
</dbReference>
<dbReference type="InterPro" id="IPR001356">
    <property type="entry name" value="HD"/>
</dbReference>
<dbReference type="InterPro" id="IPR009057">
    <property type="entry name" value="Homeodomain-like_sf"/>
</dbReference>
<dbReference type="InterPro" id="IPR024578">
    <property type="entry name" value="Homez_homeobox_dom"/>
</dbReference>
<dbReference type="PANTHER" id="PTHR15467:SF7">
    <property type="entry name" value="HOMEOBOX AND LEUCINE ZIPPER PROTEIN HOMEZ"/>
    <property type="match status" value="1"/>
</dbReference>
<dbReference type="PANTHER" id="PTHR15467">
    <property type="entry name" value="ZINC-FINGERS AND HOMEOBOXES RELATED"/>
    <property type="match status" value="1"/>
</dbReference>
<dbReference type="Pfam" id="PF11569">
    <property type="entry name" value="Homez"/>
    <property type="match status" value="1"/>
</dbReference>
<dbReference type="SMART" id="SM00389">
    <property type="entry name" value="HOX"/>
    <property type="match status" value="2"/>
</dbReference>
<dbReference type="SUPFAM" id="SSF46689">
    <property type="entry name" value="Homeodomain-like"/>
    <property type="match status" value="2"/>
</dbReference>
<dbReference type="PROSITE" id="PS50071">
    <property type="entry name" value="HOMEOBOX_2"/>
    <property type="match status" value="2"/>
</dbReference>
<gene>
    <name type="primary">HOMEZ</name>
    <name type="synonym">KIAA1443</name>
</gene>
<name>HOMEZ_HUMAN</name>
<protein>
    <recommendedName>
        <fullName>Homeobox and leucine zipper protein Homez</fullName>
    </recommendedName>
    <alternativeName>
        <fullName>Homeodomain leucine zipper-containing factor</fullName>
    </alternativeName>
</protein>
<evidence type="ECO:0000255" key="1"/>
<evidence type="ECO:0000255" key="2">
    <source>
        <dbReference type="PROSITE-ProRule" id="PRU00108"/>
    </source>
</evidence>
<evidence type="ECO:0000256" key="3">
    <source>
        <dbReference type="SAM" id="MobiDB-lite"/>
    </source>
</evidence>
<evidence type="ECO:0000269" key="4">
    <source>
    </source>
</evidence>
<evidence type="ECO:0000303" key="5">
    <source>
    </source>
</evidence>
<evidence type="ECO:0000305" key="6"/>
<evidence type="ECO:0007744" key="7">
    <source>
    </source>
</evidence>
<evidence type="ECO:0007744" key="8">
    <source>
    </source>
</evidence>
<evidence type="ECO:0007744" key="9">
    <source>
    </source>
</evidence>
<evidence type="ECO:0007744" key="10">
    <source>
    </source>
</evidence>
<evidence type="ECO:0007744" key="11">
    <source>
    </source>
</evidence>
<evidence type="ECO:0007829" key="12">
    <source>
        <dbReference type="PDB" id="2ECC"/>
    </source>
</evidence>
<evidence type="ECO:0007829" key="13">
    <source>
        <dbReference type="PDB" id="2YS9"/>
    </source>
</evidence>
<comment type="function">
    <text>May function as a transcriptional regulator.</text>
</comment>
<comment type="subunit">
    <text evidence="4 6">Homodimer or heterodimer (Potential). Interacts with HOXC8.</text>
</comment>
<comment type="interaction">
    <interactant intactId="EBI-10742083">
        <id>Q8IX15</id>
    </interactant>
    <interactant intactId="EBI-25492395">
        <id>PRO_0000449633</id>
        <label>rep</label>
        <dbReference type="UniProtKB" id="P0DTD1"/>
    </interactant>
    <organismsDiffer>true</organismsDiffer>
    <experiments>4</experiments>
</comment>
<comment type="interaction">
    <interactant intactId="EBI-10172004">
        <id>Q8IX15-3</id>
    </interactant>
    <interactant intactId="EBI-8637627">
        <id>Q8WTP8</id>
        <label>AEN</label>
    </interactant>
    <organismsDiffer>false</organismsDiffer>
    <experiments>3</experiments>
</comment>
<comment type="interaction">
    <interactant intactId="EBI-10172004">
        <id>Q8IX15-3</id>
    </interactant>
    <interactant intactId="EBI-5529649">
        <id>Q8N2Z9</id>
        <label>CENPS</label>
    </interactant>
    <organismsDiffer>false</organismsDiffer>
    <experiments>3</experiments>
</comment>
<comment type="interaction">
    <interactant intactId="EBI-10172004">
        <id>Q8IX15-3</id>
    </interactant>
    <interactant intactId="EBI-745369">
        <id>Q9H4E7</id>
        <label>DEF6</label>
    </interactant>
    <organismsDiffer>false</organismsDiffer>
    <experiments>3</experiments>
</comment>
<comment type="interaction">
    <interactant intactId="EBI-10172004">
        <id>Q8IX15-3</id>
    </interactant>
    <interactant intactId="EBI-2795449">
        <id>Q9H147</id>
        <label>DNTTIP1</label>
    </interactant>
    <organismsDiffer>false</organismsDiffer>
    <experiments>3</experiments>
</comment>
<comment type="interaction">
    <interactant intactId="EBI-10172004">
        <id>Q8IX15-3</id>
    </interactant>
    <interactant intactId="EBI-765426">
        <id>Q9UH73</id>
        <label>EBF1</label>
    </interactant>
    <organismsDiffer>false</organismsDiffer>
    <experiments>3</experiments>
</comment>
<comment type="interaction">
    <interactant intactId="EBI-10172004">
        <id>Q8IX15-3</id>
    </interactant>
    <interactant intactId="EBI-398610">
        <id>O60573</id>
        <label>EIF4E2</label>
    </interactant>
    <organismsDiffer>false</organismsDiffer>
    <experiments>3</experiments>
</comment>
<comment type="interaction">
    <interactant intactId="EBI-10172004">
        <id>Q8IX15-3</id>
    </interactant>
    <interactant intactId="EBI-742350">
        <id>Q14241</id>
        <label>ELOA</label>
    </interactant>
    <organismsDiffer>false</organismsDiffer>
    <experiments>3</experiments>
</comment>
<comment type="interaction">
    <interactant intactId="EBI-10172004">
        <id>Q8IX15-3</id>
    </interactant>
    <interactant intactId="EBI-401755">
        <id>P62993</id>
        <label>GRB2</label>
    </interactant>
    <organismsDiffer>false</organismsDiffer>
    <experiments>3</experiments>
</comment>
<comment type="interaction">
    <interactant intactId="EBI-10172004">
        <id>Q8IX15-3</id>
    </interactant>
    <interactant intactId="EBI-349938">
        <id>P52292</id>
        <label>KPNA2</label>
    </interactant>
    <organismsDiffer>false</organismsDiffer>
    <experiments>3</experiments>
</comment>
<comment type="interaction">
    <interactant intactId="EBI-10172004">
        <id>Q8IX15-3</id>
    </interactant>
    <interactant intactId="EBI-739832">
        <id>Q8TBB1</id>
        <label>LNX1</label>
    </interactant>
    <organismsDiffer>false</organismsDiffer>
    <experiments>3</experiments>
</comment>
<comment type="interaction">
    <interactant intactId="EBI-10172004">
        <id>Q8IX15-3</id>
    </interactant>
    <interactant intactId="EBI-10171988">
        <id>A1L1C6</id>
        <label>LRRC7</label>
    </interactant>
    <organismsDiffer>false</organismsDiffer>
    <experiments>3</experiments>
</comment>
<comment type="interaction">
    <interactant intactId="EBI-10172004">
        <id>Q8IX15-3</id>
    </interactant>
    <interactant intactId="EBI-712181">
        <id>Q15013</id>
        <label>MAD2L1BP</label>
    </interactant>
    <organismsDiffer>false</organismsDiffer>
    <experiments>3</experiments>
</comment>
<comment type="interaction">
    <interactant intactId="EBI-10172004">
        <id>Q8IX15-3</id>
    </interactant>
    <interactant intactId="EBI-394640">
        <id>Q9BUE0</id>
        <label>MED18</label>
    </interactant>
    <organismsDiffer>false</organismsDiffer>
    <experiments>3</experiments>
</comment>
<comment type="interaction">
    <interactant intactId="EBI-10172004">
        <id>Q8IX15-3</id>
    </interactant>
    <interactant intactId="EBI-5453723">
        <id>Q9Y3B7</id>
        <label>MRPL11</label>
    </interactant>
    <organismsDiffer>false</organismsDiffer>
    <experiments>3</experiments>
</comment>
<comment type="interaction">
    <interactant intactId="EBI-10172004">
        <id>Q8IX15-3</id>
    </interactant>
    <interactant intactId="EBI-713635">
        <id>O43639</id>
        <label>NCK2</label>
    </interactant>
    <organismsDiffer>false</organismsDiffer>
    <experiments>3</experiments>
</comment>
<comment type="interaction">
    <interactant intactId="EBI-10172004">
        <id>Q8IX15-3</id>
    </interactant>
    <interactant intactId="EBI-714158">
        <id>Q13526</id>
        <label>PIN1</label>
    </interactant>
    <organismsDiffer>false</organismsDiffer>
    <experiments>3</experiments>
</comment>
<comment type="interaction">
    <interactant intactId="EBI-10172004">
        <id>Q8IX15-3</id>
    </interactant>
    <interactant intactId="EBI-1181405">
        <id>Q13131</id>
        <label>PRKAA1</label>
    </interactant>
    <organismsDiffer>false</organismsDiffer>
    <experiments>3</experiments>
</comment>
<comment type="interaction">
    <interactant intactId="EBI-10172004">
        <id>Q8IX15-3</id>
    </interactant>
    <interactant intactId="EBI-1383852">
        <id>P54646</id>
        <label>PRKAA2</label>
    </interactant>
    <organismsDiffer>false</organismsDiffer>
    <experiments>3</experiments>
</comment>
<comment type="interaction">
    <interactant intactId="EBI-10172004">
        <id>Q8IX15-3</id>
    </interactant>
    <interactant intactId="EBI-6654703">
        <id>Q14498-3</id>
        <label>RBM39</label>
    </interactant>
    <organismsDiffer>false</organismsDiffer>
    <experiments>3</experiments>
</comment>
<comment type="interaction">
    <interactant intactId="EBI-10172004">
        <id>Q8IX15-3</id>
    </interactant>
    <interactant intactId="EBI-373337">
        <id>O76064</id>
        <label>RNF8</label>
    </interactant>
    <organismsDiffer>false</organismsDiffer>
    <experiments>3</experiments>
</comment>
<comment type="interaction">
    <interactant intactId="EBI-10172004">
        <id>Q8IX15-3</id>
    </interactant>
    <interactant intactId="EBI-6558417">
        <id>Q92834</id>
        <label>RPGR</label>
    </interactant>
    <organismsDiffer>false</organismsDiffer>
    <experiments>3</experiments>
</comment>
<comment type="interaction">
    <interactant intactId="EBI-10172004">
        <id>Q8IX15-3</id>
    </interactant>
    <interactant intactId="EBI-16431517">
        <id>Q92834-6</id>
        <label>RPGR</label>
    </interactant>
    <organismsDiffer>false</organismsDiffer>
    <experiments>3</experiments>
</comment>
<comment type="interaction">
    <interactant intactId="EBI-10172004">
        <id>Q8IX15-3</id>
    </interactant>
    <interactant intactId="EBI-358122">
        <id>P32969</id>
        <label>RPL9P9</label>
    </interactant>
    <organismsDiffer>false</organismsDiffer>
    <experiments>3</experiments>
</comment>
<comment type="interaction">
    <interactant intactId="EBI-10172004">
        <id>Q8IX15-3</id>
    </interactant>
    <interactant intactId="EBI-727004">
        <id>O00560</id>
        <label>SDCBP</label>
    </interactant>
    <organismsDiffer>false</organismsDiffer>
    <experiments>3</experiments>
</comment>
<comment type="interaction">
    <interactant intactId="EBI-10172004">
        <id>Q8IX15-3</id>
    </interactant>
    <interactant intactId="EBI-10225873">
        <id>Q08AM8</id>
        <label>SH3RF2</label>
    </interactant>
    <organismsDiffer>false</organismsDiffer>
    <experiments>3</experiments>
</comment>
<comment type="interaction">
    <interactant intactId="EBI-10172004">
        <id>Q8IX15-3</id>
    </interactant>
    <interactant intactId="EBI-8463848">
        <id>Q8NB12</id>
        <label>SMYD1</label>
    </interactant>
    <organismsDiffer>false</organismsDiffer>
    <experiments>3</experiments>
</comment>
<comment type="interaction">
    <interactant intactId="EBI-10172004">
        <id>Q8IX15-3</id>
    </interactant>
    <interactant intactId="EBI-1053651">
        <id>P08579</id>
        <label>SNRPB2</label>
    </interactant>
    <organismsDiffer>false</organismsDiffer>
    <experiments>3</experiments>
</comment>
<comment type="interaction">
    <interactant intactId="EBI-10172004">
        <id>Q8IX15-3</id>
    </interactant>
    <interactant intactId="EBI-473220">
        <id>P61956</id>
        <label>SUMO2</label>
    </interactant>
    <organismsDiffer>false</organismsDiffer>
    <experiments>3</experiments>
</comment>
<comment type="interaction">
    <interactant intactId="EBI-10172004">
        <id>Q8IX15-3</id>
    </interactant>
    <interactant intactId="EBI-747736">
        <id>Q15561</id>
        <label>TEAD4</label>
    </interactant>
    <organismsDiffer>false</organismsDiffer>
    <experiments>3</experiments>
</comment>
<comment type="interaction">
    <interactant intactId="EBI-10172004">
        <id>Q8IX15-3</id>
    </interactant>
    <interactant intactId="EBI-717810">
        <id>Q08117</id>
        <label>TLE5</label>
    </interactant>
    <organismsDiffer>false</organismsDiffer>
    <experiments>3</experiments>
</comment>
<comment type="interaction">
    <interactant intactId="EBI-10172004">
        <id>Q8IX15-3</id>
    </interactant>
    <interactant intactId="EBI-3650647">
        <id>Q9BUZ4</id>
        <label>TRAF4</label>
    </interactant>
    <organismsDiffer>false</organismsDiffer>
    <experiments>3</experiments>
</comment>
<comment type="interaction">
    <interactant intactId="EBI-10172004">
        <id>Q8IX15-3</id>
    </interactant>
    <interactant intactId="EBI-2795384">
        <id>O95365</id>
        <label>ZBTB7A</label>
    </interactant>
    <organismsDiffer>false</organismsDiffer>
    <experiments>3</experiments>
</comment>
<comment type="subcellular location">
    <subcellularLocation>
        <location evidence="2 4">Nucleus</location>
    </subcellularLocation>
</comment>
<comment type="alternative products">
    <event type="alternative splicing"/>
    <isoform>
        <id>Q8IX15-1</id>
        <name>1</name>
        <sequence type="displayed"/>
    </isoform>
    <isoform>
        <id>Q8IX15-3</id>
        <name>2</name>
        <sequence type="described" ref="VSP_054303"/>
    </isoform>
</comment>
<comment type="tissue specificity">
    <text evidence="4">Ubiquitous. Strongly expressed in adult testis and kidney as well as fetal lung and kidney.</text>
</comment>
<comment type="caution">
    <text evidence="6">It is uncertain whether Met-1 or Met-25 is the initiator.</text>
</comment>
<comment type="sequence caution" evidence="6">
    <conflict type="erroneous initiation">
        <sequence resource="EMBL-CDS" id="AAN76991"/>
    </conflict>
    <text>Truncated N-terminus.</text>
</comment>
<comment type="sequence caution" evidence="6">
    <conflict type="erroneous initiation">
        <sequence resource="EMBL-CDS" id="BAA92681"/>
    </conflict>
    <text>Extended N-terminus.</text>
</comment>
<proteinExistence type="evidence at protein level"/>
<sequence length="550" mass="61240">MVRGWEPPPGLDCAISEGHKSEGTMPPNKEASGLSSSPAGLICLPPISEELQLVWTQAAQTSELDSNEHLLKTFSYFPYPSLADIALLCLRYGLQMEKVKTWFMAQRLRCGISWSSEEIEETRARVVYRRDQLHFKSLLSFTHHAGRPPEEVPPPPVPAPEQVGIGIGPPTLSKPTQTKGLKVEPEEPSQMPPLPQSHQKLKESLMTPGSGAFPYQSDFWQHLQSSGLSKEQAGRGPNQSHGIGTASWNHSTTVPQPQARDKPPPIALIASSCKEESASSVTPSSSSTSSSFQVLANGATAASKPLQPLGCVPQSVSPSEQALPPHLEPAWPQGLRHNSVPGRVGPTEYLSPDMQRQRKTKRKTKEQLAILKSFFLQCQWARREDYQKLEQITGLPRPEIIQWFGDTRYALKHGQLKWFRDNAVPGAPSFQDPAIPTPPPSTRSLNERAETPPLPIPPPPPDIQPLERYWAAHQQLRETDIPQLSQASRLSTQQVLDWFDSRLPQPAEVVVCLDEEEEEEEEELPEDDEEEEEEEEEDDDDDDDDVIIQD</sequence>